<protein>
    <recommendedName>
        <fullName evidence="1">Adenylosuccinate synthetase</fullName>
        <shortName evidence="1">AMPSase</shortName>
        <shortName evidence="1">AdSS</shortName>
        <ecNumber evidence="1">6.3.4.4</ecNumber>
    </recommendedName>
    <alternativeName>
        <fullName evidence="1">IMP--aspartate ligase</fullName>
    </alternativeName>
</protein>
<organism>
    <name type="scientific">Bifidobacterium adolescentis (strain ATCC 15703 / DSM 20083 / NCTC 11814 / E194a)</name>
    <dbReference type="NCBI Taxonomy" id="367928"/>
    <lineage>
        <taxon>Bacteria</taxon>
        <taxon>Bacillati</taxon>
        <taxon>Actinomycetota</taxon>
        <taxon>Actinomycetes</taxon>
        <taxon>Bifidobacteriales</taxon>
        <taxon>Bifidobacteriaceae</taxon>
        <taxon>Bifidobacterium</taxon>
    </lineage>
</organism>
<keyword id="KW-0963">Cytoplasm</keyword>
<keyword id="KW-0342">GTP-binding</keyword>
<keyword id="KW-0436">Ligase</keyword>
<keyword id="KW-0460">Magnesium</keyword>
<keyword id="KW-0479">Metal-binding</keyword>
<keyword id="KW-0547">Nucleotide-binding</keyword>
<keyword id="KW-0658">Purine biosynthesis</keyword>
<keyword id="KW-1185">Reference proteome</keyword>
<sequence>MPGIVLIGAQWGDEGKGKATDLIGTKVDYVARFNGGNNAGHTVVVGDESYALHLLPSGIISPNTTPVIGNGVVVDPEVLFQEIDGLESRGVDCSRLLVSESAHIIAPYHRVLDKVTERFLGKHKIGTTGRGIGPAYADKINRVGIRVHDLFNAEHLHDKVEASLHQKNQMLVKLYNRRPIDVDETTDELLKLGERLKPYVANTSLVLNKALDEGKTVLFEGGQATMLDVDHGTYPFVTSSNPTAGGACTGTGVGPTKITRVVGVSKAYVTRVGEGPFPTELFGEEGEWLRAQGHEYGVTTGRPRRCGWFDAVVNRYAAQVNGLTDIVLTKLDVLTGLKEIPLCVAYDVNGERRDDMPTDQAEFAAAKPIYESMPGWDEDISQVHDFNDLPKTCQDYVKRLEELSGCRISVIGTGPQRDHIIQINSLID</sequence>
<reference key="1">
    <citation type="submission" date="2006-12" db="EMBL/GenBank/DDBJ databases">
        <title>Bifidobacterium adolescentis complete genome sequence.</title>
        <authorList>
            <person name="Suzuki T."/>
            <person name="Tsuda Y."/>
            <person name="Kanou N."/>
            <person name="Inoue T."/>
            <person name="Kumazaki K."/>
            <person name="Nagano S."/>
            <person name="Hirai S."/>
            <person name="Tanaka K."/>
            <person name="Watanabe K."/>
        </authorList>
    </citation>
    <scope>NUCLEOTIDE SEQUENCE [LARGE SCALE GENOMIC DNA]</scope>
    <source>
        <strain>ATCC 15703 / DSM 20083 / NCTC 11814 / E194a</strain>
    </source>
</reference>
<name>PURA_BIFAA</name>
<dbReference type="EC" id="6.3.4.4" evidence="1"/>
<dbReference type="EMBL" id="AP009256">
    <property type="protein sequence ID" value="BAF38848.1"/>
    <property type="molecule type" value="Genomic_DNA"/>
</dbReference>
<dbReference type="RefSeq" id="WP_011742617.1">
    <property type="nucleotide sequence ID" value="NC_008618.1"/>
</dbReference>
<dbReference type="SMR" id="A0ZZG5"/>
<dbReference type="STRING" id="367928.BAD_0067"/>
<dbReference type="PaxDb" id="1680-BADO_0054"/>
<dbReference type="GeneID" id="4556691"/>
<dbReference type="KEGG" id="bad:BAD_0067"/>
<dbReference type="HOGENOM" id="CLU_029848_0_0_11"/>
<dbReference type="UniPathway" id="UPA00075">
    <property type="reaction ID" value="UER00335"/>
</dbReference>
<dbReference type="Proteomes" id="UP000008702">
    <property type="component" value="Chromosome"/>
</dbReference>
<dbReference type="GO" id="GO:0005737">
    <property type="term" value="C:cytoplasm"/>
    <property type="evidence" value="ECO:0007669"/>
    <property type="project" value="UniProtKB-SubCell"/>
</dbReference>
<dbReference type="GO" id="GO:0004019">
    <property type="term" value="F:adenylosuccinate synthase activity"/>
    <property type="evidence" value="ECO:0007669"/>
    <property type="project" value="UniProtKB-UniRule"/>
</dbReference>
<dbReference type="GO" id="GO:0005525">
    <property type="term" value="F:GTP binding"/>
    <property type="evidence" value="ECO:0007669"/>
    <property type="project" value="UniProtKB-UniRule"/>
</dbReference>
<dbReference type="GO" id="GO:0000287">
    <property type="term" value="F:magnesium ion binding"/>
    <property type="evidence" value="ECO:0007669"/>
    <property type="project" value="UniProtKB-UniRule"/>
</dbReference>
<dbReference type="GO" id="GO:0044208">
    <property type="term" value="P:'de novo' AMP biosynthetic process"/>
    <property type="evidence" value="ECO:0007669"/>
    <property type="project" value="UniProtKB-UniRule"/>
</dbReference>
<dbReference type="GO" id="GO:0046040">
    <property type="term" value="P:IMP metabolic process"/>
    <property type="evidence" value="ECO:0007669"/>
    <property type="project" value="TreeGrafter"/>
</dbReference>
<dbReference type="CDD" id="cd03108">
    <property type="entry name" value="AdSS"/>
    <property type="match status" value="1"/>
</dbReference>
<dbReference type="FunFam" id="1.10.300.10:FF:000001">
    <property type="entry name" value="Adenylosuccinate synthetase"/>
    <property type="match status" value="1"/>
</dbReference>
<dbReference type="FunFam" id="3.90.170.10:FF:000001">
    <property type="entry name" value="Adenylosuccinate synthetase"/>
    <property type="match status" value="1"/>
</dbReference>
<dbReference type="Gene3D" id="3.40.440.10">
    <property type="entry name" value="Adenylosuccinate Synthetase, subunit A, domain 1"/>
    <property type="match status" value="1"/>
</dbReference>
<dbReference type="Gene3D" id="1.10.300.10">
    <property type="entry name" value="Adenylosuccinate Synthetase, subunit A, domain 2"/>
    <property type="match status" value="1"/>
</dbReference>
<dbReference type="Gene3D" id="3.90.170.10">
    <property type="entry name" value="Adenylosuccinate Synthetase, subunit A, domain 3"/>
    <property type="match status" value="1"/>
</dbReference>
<dbReference type="HAMAP" id="MF_00011">
    <property type="entry name" value="Adenylosucc_synth"/>
    <property type="match status" value="1"/>
</dbReference>
<dbReference type="InterPro" id="IPR018220">
    <property type="entry name" value="Adenylosuccin_syn_GTP-bd"/>
</dbReference>
<dbReference type="InterPro" id="IPR033128">
    <property type="entry name" value="Adenylosuccin_syn_Lys_AS"/>
</dbReference>
<dbReference type="InterPro" id="IPR042109">
    <property type="entry name" value="Adenylosuccinate_synth_dom1"/>
</dbReference>
<dbReference type="InterPro" id="IPR042110">
    <property type="entry name" value="Adenylosuccinate_synth_dom2"/>
</dbReference>
<dbReference type="InterPro" id="IPR042111">
    <property type="entry name" value="Adenylosuccinate_synth_dom3"/>
</dbReference>
<dbReference type="InterPro" id="IPR001114">
    <property type="entry name" value="Adenylosuccinate_synthetase"/>
</dbReference>
<dbReference type="InterPro" id="IPR027417">
    <property type="entry name" value="P-loop_NTPase"/>
</dbReference>
<dbReference type="NCBIfam" id="NF002223">
    <property type="entry name" value="PRK01117.1"/>
    <property type="match status" value="1"/>
</dbReference>
<dbReference type="NCBIfam" id="TIGR00184">
    <property type="entry name" value="purA"/>
    <property type="match status" value="1"/>
</dbReference>
<dbReference type="PANTHER" id="PTHR11846">
    <property type="entry name" value="ADENYLOSUCCINATE SYNTHETASE"/>
    <property type="match status" value="1"/>
</dbReference>
<dbReference type="PANTHER" id="PTHR11846:SF0">
    <property type="entry name" value="ADENYLOSUCCINATE SYNTHETASE"/>
    <property type="match status" value="1"/>
</dbReference>
<dbReference type="Pfam" id="PF00709">
    <property type="entry name" value="Adenylsucc_synt"/>
    <property type="match status" value="1"/>
</dbReference>
<dbReference type="SMART" id="SM00788">
    <property type="entry name" value="Adenylsucc_synt"/>
    <property type="match status" value="1"/>
</dbReference>
<dbReference type="SUPFAM" id="SSF52540">
    <property type="entry name" value="P-loop containing nucleoside triphosphate hydrolases"/>
    <property type="match status" value="1"/>
</dbReference>
<dbReference type="PROSITE" id="PS01266">
    <property type="entry name" value="ADENYLOSUCCIN_SYN_1"/>
    <property type="match status" value="1"/>
</dbReference>
<dbReference type="PROSITE" id="PS00513">
    <property type="entry name" value="ADENYLOSUCCIN_SYN_2"/>
    <property type="match status" value="1"/>
</dbReference>
<comment type="function">
    <text evidence="1">Plays an important role in the de novo pathway of purine nucleotide biosynthesis. Catalyzes the first committed step in the biosynthesis of AMP from IMP.</text>
</comment>
<comment type="catalytic activity">
    <reaction evidence="1">
        <text>IMP + L-aspartate + GTP = N(6)-(1,2-dicarboxyethyl)-AMP + GDP + phosphate + 2 H(+)</text>
        <dbReference type="Rhea" id="RHEA:15753"/>
        <dbReference type="ChEBI" id="CHEBI:15378"/>
        <dbReference type="ChEBI" id="CHEBI:29991"/>
        <dbReference type="ChEBI" id="CHEBI:37565"/>
        <dbReference type="ChEBI" id="CHEBI:43474"/>
        <dbReference type="ChEBI" id="CHEBI:57567"/>
        <dbReference type="ChEBI" id="CHEBI:58053"/>
        <dbReference type="ChEBI" id="CHEBI:58189"/>
        <dbReference type="EC" id="6.3.4.4"/>
    </reaction>
</comment>
<comment type="cofactor">
    <cofactor evidence="1">
        <name>Mg(2+)</name>
        <dbReference type="ChEBI" id="CHEBI:18420"/>
    </cofactor>
    <text evidence="1">Binds 1 Mg(2+) ion per subunit.</text>
</comment>
<comment type="pathway">
    <text evidence="1">Purine metabolism; AMP biosynthesis via de novo pathway; AMP from IMP: step 1/2.</text>
</comment>
<comment type="subunit">
    <text evidence="1">Homodimer.</text>
</comment>
<comment type="subcellular location">
    <subcellularLocation>
        <location evidence="1">Cytoplasm</location>
    </subcellularLocation>
</comment>
<comment type="similarity">
    <text evidence="1">Belongs to the adenylosuccinate synthetase family.</text>
</comment>
<accession>A0ZZG5</accession>
<feature type="chain" id="PRO_1000000783" description="Adenylosuccinate synthetase">
    <location>
        <begin position="1"/>
        <end position="428"/>
    </location>
</feature>
<feature type="active site" description="Proton acceptor" evidence="1">
    <location>
        <position position="13"/>
    </location>
</feature>
<feature type="active site" description="Proton donor" evidence="1">
    <location>
        <position position="41"/>
    </location>
</feature>
<feature type="binding site" evidence="1">
    <location>
        <begin position="12"/>
        <end position="18"/>
    </location>
    <ligand>
        <name>GTP</name>
        <dbReference type="ChEBI" id="CHEBI:37565"/>
    </ligand>
</feature>
<feature type="binding site" description="in other chain" evidence="1">
    <location>
        <begin position="13"/>
        <end position="16"/>
    </location>
    <ligand>
        <name>IMP</name>
        <dbReference type="ChEBI" id="CHEBI:58053"/>
        <note>ligand shared between dimeric partners</note>
    </ligand>
</feature>
<feature type="binding site" evidence="1">
    <location>
        <position position="13"/>
    </location>
    <ligand>
        <name>Mg(2+)</name>
        <dbReference type="ChEBI" id="CHEBI:18420"/>
    </ligand>
</feature>
<feature type="binding site" description="in other chain" evidence="1">
    <location>
        <begin position="38"/>
        <end position="41"/>
    </location>
    <ligand>
        <name>IMP</name>
        <dbReference type="ChEBI" id="CHEBI:58053"/>
        <note>ligand shared between dimeric partners</note>
    </ligand>
</feature>
<feature type="binding site" evidence="1">
    <location>
        <begin position="40"/>
        <end position="42"/>
    </location>
    <ligand>
        <name>GTP</name>
        <dbReference type="ChEBI" id="CHEBI:37565"/>
    </ligand>
</feature>
<feature type="binding site" evidence="1">
    <location>
        <position position="40"/>
    </location>
    <ligand>
        <name>Mg(2+)</name>
        <dbReference type="ChEBI" id="CHEBI:18420"/>
    </ligand>
</feature>
<feature type="binding site" description="in other chain" evidence="1">
    <location>
        <position position="128"/>
    </location>
    <ligand>
        <name>IMP</name>
        <dbReference type="ChEBI" id="CHEBI:58053"/>
        <note>ligand shared between dimeric partners</note>
    </ligand>
</feature>
<feature type="binding site" evidence="1">
    <location>
        <position position="142"/>
    </location>
    <ligand>
        <name>IMP</name>
        <dbReference type="ChEBI" id="CHEBI:58053"/>
        <note>ligand shared between dimeric partners</note>
    </ligand>
</feature>
<feature type="binding site" description="in other chain" evidence="1">
    <location>
        <position position="223"/>
    </location>
    <ligand>
        <name>IMP</name>
        <dbReference type="ChEBI" id="CHEBI:58053"/>
        <note>ligand shared between dimeric partners</note>
    </ligand>
</feature>
<feature type="binding site" description="in other chain" evidence="1">
    <location>
        <position position="238"/>
    </location>
    <ligand>
        <name>IMP</name>
        <dbReference type="ChEBI" id="CHEBI:58053"/>
        <note>ligand shared between dimeric partners</note>
    </ligand>
</feature>
<feature type="binding site" evidence="1">
    <location>
        <begin position="298"/>
        <end position="304"/>
    </location>
    <ligand>
        <name>substrate</name>
    </ligand>
</feature>
<feature type="binding site" description="in other chain" evidence="1">
    <location>
        <position position="302"/>
    </location>
    <ligand>
        <name>IMP</name>
        <dbReference type="ChEBI" id="CHEBI:58053"/>
        <note>ligand shared between dimeric partners</note>
    </ligand>
</feature>
<feature type="binding site" evidence="1">
    <location>
        <position position="304"/>
    </location>
    <ligand>
        <name>GTP</name>
        <dbReference type="ChEBI" id="CHEBI:37565"/>
    </ligand>
</feature>
<feature type="binding site" evidence="1">
    <location>
        <begin position="330"/>
        <end position="332"/>
    </location>
    <ligand>
        <name>GTP</name>
        <dbReference type="ChEBI" id="CHEBI:37565"/>
    </ligand>
</feature>
<feature type="binding site" evidence="1">
    <location>
        <begin position="412"/>
        <end position="414"/>
    </location>
    <ligand>
        <name>GTP</name>
        <dbReference type="ChEBI" id="CHEBI:37565"/>
    </ligand>
</feature>
<gene>
    <name evidence="1" type="primary">purA</name>
    <name type="ordered locus">BAD_0067</name>
</gene>
<evidence type="ECO:0000255" key="1">
    <source>
        <dbReference type="HAMAP-Rule" id="MF_00011"/>
    </source>
</evidence>
<proteinExistence type="inferred from homology"/>